<organism>
    <name type="scientific">Ureaplasma urealyticum serovar 10 (strain ATCC 33699 / Western)</name>
    <dbReference type="NCBI Taxonomy" id="565575"/>
    <lineage>
        <taxon>Bacteria</taxon>
        <taxon>Bacillati</taxon>
        <taxon>Mycoplasmatota</taxon>
        <taxon>Mycoplasmoidales</taxon>
        <taxon>Mycoplasmoidaceae</taxon>
        <taxon>Ureaplasma</taxon>
    </lineage>
</organism>
<reference key="1">
    <citation type="submission" date="2008-10" db="EMBL/GenBank/DDBJ databases">
        <title>Genome sequence of Ureaplasma urealyticum serovar 10 ATCC-33699.</title>
        <authorList>
            <person name="Shrivastava S."/>
            <person name="Methe B.A."/>
            <person name="Glass J."/>
            <person name="White K."/>
            <person name="Duffy L.B."/>
        </authorList>
    </citation>
    <scope>NUCLEOTIDE SEQUENCE [LARGE SCALE GENOMIC DNA]</scope>
    <source>
        <strain>ATCC 33699 / Western</strain>
    </source>
</reference>
<name>END4_UREU1</name>
<gene>
    <name evidence="1" type="primary">nfo</name>
    <name type="ordered locus">UUR10_0310</name>
</gene>
<keyword id="KW-0227">DNA damage</keyword>
<keyword id="KW-0234">DNA repair</keyword>
<keyword id="KW-0255">Endonuclease</keyword>
<keyword id="KW-0378">Hydrolase</keyword>
<keyword id="KW-0479">Metal-binding</keyword>
<keyword id="KW-0540">Nuclease</keyword>
<keyword id="KW-0862">Zinc</keyword>
<dbReference type="EC" id="3.1.21.2" evidence="1"/>
<dbReference type="EMBL" id="CP001184">
    <property type="protein sequence ID" value="ACI59878.1"/>
    <property type="molecule type" value="Genomic_DNA"/>
</dbReference>
<dbReference type="RefSeq" id="WP_004025571.1">
    <property type="nucleotide sequence ID" value="NC_011374.1"/>
</dbReference>
<dbReference type="SMR" id="B5ZBB4"/>
<dbReference type="STRING" id="565575.UUR10_0310"/>
<dbReference type="KEGG" id="uue:UUR10_0310"/>
<dbReference type="eggNOG" id="COG0648">
    <property type="taxonomic scope" value="Bacteria"/>
</dbReference>
<dbReference type="HOGENOM" id="CLU_025885_4_1_14"/>
<dbReference type="OrthoDB" id="9805666at2"/>
<dbReference type="Proteomes" id="UP000002018">
    <property type="component" value="Chromosome"/>
</dbReference>
<dbReference type="GO" id="GO:0008833">
    <property type="term" value="F:deoxyribonuclease IV (phage-T4-induced) activity"/>
    <property type="evidence" value="ECO:0007669"/>
    <property type="project" value="UniProtKB-UniRule"/>
</dbReference>
<dbReference type="GO" id="GO:0003677">
    <property type="term" value="F:DNA binding"/>
    <property type="evidence" value="ECO:0007669"/>
    <property type="project" value="InterPro"/>
</dbReference>
<dbReference type="GO" id="GO:0003906">
    <property type="term" value="F:DNA-(apurinic or apyrimidinic site) endonuclease activity"/>
    <property type="evidence" value="ECO:0007669"/>
    <property type="project" value="TreeGrafter"/>
</dbReference>
<dbReference type="GO" id="GO:0008081">
    <property type="term" value="F:phosphoric diester hydrolase activity"/>
    <property type="evidence" value="ECO:0007669"/>
    <property type="project" value="TreeGrafter"/>
</dbReference>
<dbReference type="GO" id="GO:0008270">
    <property type="term" value="F:zinc ion binding"/>
    <property type="evidence" value="ECO:0007669"/>
    <property type="project" value="UniProtKB-UniRule"/>
</dbReference>
<dbReference type="GO" id="GO:0006284">
    <property type="term" value="P:base-excision repair"/>
    <property type="evidence" value="ECO:0007669"/>
    <property type="project" value="TreeGrafter"/>
</dbReference>
<dbReference type="CDD" id="cd00019">
    <property type="entry name" value="AP2Ec"/>
    <property type="match status" value="1"/>
</dbReference>
<dbReference type="FunFam" id="3.20.20.150:FF:000001">
    <property type="entry name" value="Probable endonuclease 4"/>
    <property type="match status" value="1"/>
</dbReference>
<dbReference type="Gene3D" id="3.20.20.150">
    <property type="entry name" value="Divalent-metal-dependent TIM barrel enzymes"/>
    <property type="match status" value="1"/>
</dbReference>
<dbReference type="HAMAP" id="MF_00152">
    <property type="entry name" value="Nfo"/>
    <property type="match status" value="1"/>
</dbReference>
<dbReference type="InterPro" id="IPR001719">
    <property type="entry name" value="AP_endonuc_2"/>
</dbReference>
<dbReference type="InterPro" id="IPR018246">
    <property type="entry name" value="AP_endonuc_F2_Zn_BS"/>
</dbReference>
<dbReference type="InterPro" id="IPR036237">
    <property type="entry name" value="Xyl_isomerase-like_sf"/>
</dbReference>
<dbReference type="InterPro" id="IPR013022">
    <property type="entry name" value="Xyl_isomerase-like_TIM-brl"/>
</dbReference>
<dbReference type="NCBIfam" id="TIGR00587">
    <property type="entry name" value="nfo"/>
    <property type="match status" value="1"/>
</dbReference>
<dbReference type="NCBIfam" id="NF002196">
    <property type="entry name" value="PRK01060.1-1"/>
    <property type="match status" value="1"/>
</dbReference>
<dbReference type="PANTHER" id="PTHR21445:SF0">
    <property type="entry name" value="APURINIC-APYRIMIDINIC ENDONUCLEASE"/>
    <property type="match status" value="1"/>
</dbReference>
<dbReference type="PANTHER" id="PTHR21445">
    <property type="entry name" value="ENDONUCLEASE IV ENDODEOXYRIBONUCLEASE IV"/>
    <property type="match status" value="1"/>
</dbReference>
<dbReference type="Pfam" id="PF01261">
    <property type="entry name" value="AP_endonuc_2"/>
    <property type="match status" value="1"/>
</dbReference>
<dbReference type="SMART" id="SM00518">
    <property type="entry name" value="AP2Ec"/>
    <property type="match status" value="1"/>
</dbReference>
<dbReference type="SUPFAM" id="SSF51658">
    <property type="entry name" value="Xylose isomerase-like"/>
    <property type="match status" value="1"/>
</dbReference>
<dbReference type="PROSITE" id="PS00729">
    <property type="entry name" value="AP_NUCLEASE_F2_1"/>
    <property type="match status" value="1"/>
</dbReference>
<dbReference type="PROSITE" id="PS00730">
    <property type="entry name" value="AP_NUCLEASE_F2_2"/>
    <property type="match status" value="1"/>
</dbReference>
<dbReference type="PROSITE" id="PS00731">
    <property type="entry name" value="AP_NUCLEASE_F2_3"/>
    <property type="match status" value="1"/>
</dbReference>
<dbReference type="PROSITE" id="PS51432">
    <property type="entry name" value="AP_NUCLEASE_F2_4"/>
    <property type="match status" value="1"/>
</dbReference>
<comment type="function">
    <text evidence="1">Endonuclease IV plays a role in DNA repair. It cleaves phosphodiester bonds at apurinic or apyrimidinic (AP) sites, generating a 3'-hydroxyl group and a 5'-terminal sugar phosphate.</text>
</comment>
<comment type="catalytic activity">
    <reaction evidence="1">
        <text>Endonucleolytic cleavage to 5'-phosphooligonucleotide end-products.</text>
        <dbReference type="EC" id="3.1.21.2"/>
    </reaction>
</comment>
<comment type="cofactor">
    <cofactor evidence="1">
        <name>Zn(2+)</name>
        <dbReference type="ChEBI" id="CHEBI:29105"/>
    </cofactor>
    <text evidence="1">Binds 3 Zn(2+) ions.</text>
</comment>
<comment type="similarity">
    <text evidence="1">Belongs to the AP endonuclease 2 family.</text>
</comment>
<protein>
    <recommendedName>
        <fullName evidence="1">Probable endonuclease 4</fullName>
        <ecNumber evidence="1">3.1.21.2</ecNumber>
    </recommendedName>
    <alternativeName>
        <fullName evidence="1">Endodeoxyribonuclease IV</fullName>
    </alternativeName>
    <alternativeName>
        <fullName evidence="1">Endonuclease IV</fullName>
    </alternativeName>
</protein>
<proteinExistence type="inferred from homology"/>
<sequence length="304" mass="34845">MDKYNLIIGSHVSLKANDFFYGSVKEALSYGANTLMVYTGAPQNTRRQPIELFKINEAHNLLKEHNIDLNNLIVHAPYIINPCSSKKYVRELAKEFLIQEIERTQFMGITKIVLHPGSCLDQDEDIALKQVYTMLNEIFATINTNVVVCLETMSGKGSEIGINLKQLKTIIDNVDSKKNIGVCLDTCHMSDSGIALDHDSFNQYLKEFDAQIGIDYIKVLHINDSKNPRGANKDRHENLGYGTIGFDNLINIIYHPLLNNIPKILETPWFDFHDQSISLYEYEIKMIRDRKWFDIKYKLLVGNK</sequence>
<feature type="chain" id="PRO_1000096910" description="Probable endonuclease 4">
    <location>
        <begin position="1"/>
        <end position="304"/>
    </location>
</feature>
<feature type="binding site" evidence="1">
    <location>
        <position position="75"/>
    </location>
    <ligand>
        <name>Zn(2+)</name>
        <dbReference type="ChEBI" id="CHEBI:29105"/>
        <label>1</label>
    </ligand>
</feature>
<feature type="binding site" evidence="1">
    <location>
        <position position="115"/>
    </location>
    <ligand>
        <name>Zn(2+)</name>
        <dbReference type="ChEBI" id="CHEBI:29105"/>
        <label>1</label>
    </ligand>
</feature>
<feature type="binding site" evidence="1">
    <location>
        <position position="151"/>
    </location>
    <ligand>
        <name>Zn(2+)</name>
        <dbReference type="ChEBI" id="CHEBI:29105"/>
        <label>1</label>
    </ligand>
</feature>
<feature type="binding site" evidence="1">
    <location>
        <position position="151"/>
    </location>
    <ligand>
        <name>Zn(2+)</name>
        <dbReference type="ChEBI" id="CHEBI:29105"/>
        <label>2</label>
    </ligand>
</feature>
<feature type="binding site" evidence="1">
    <location>
        <position position="185"/>
    </location>
    <ligand>
        <name>Zn(2+)</name>
        <dbReference type="ChEBI" id="CHEBI:29105"/>
        <label>2</label>
    </ligand>
</feature>
<feature type="binding site" evidence="1">
    <location>
        <position position="188"/>
    </location>
    <ligand>
        <name>Zn(2+)</name>
        <dbReference type="ChEBI" id="CHEBI:29105"/>
        <label>3</label>
    </ligand>
</feature>
<feature type="binding site" evidence="1">
    <location>
        <position position="221"/>
    </location>
    <ligand>
        <name>Zn(2+)</name>
        <dbReference type="ChEBI" id="CHEBI:29105"/>
        <label>2</label>
    </ligand>
</feature>
<feature type="binding site" evidence="1">
    <location>
        <position position="234"/>
    </location>
    <ligand>
        <name>Zn(2+)</name>
        <dbReference type="ChEBI" id="CHEBI:29105"/>
        <label>3</label>
    </ligand>
</feature>
<feature type="binding site" evidence="1">
    <location>
        <position position="236"/>
    </location>
    <ligand>
        <name>Zn(2+)</name>
        <dbReference type="ChEBI" id="CHEBI:29105"/>
        <label>3</label>
    </ligand>
</feature>
<feature type="binding site" evidence="1">
    <location>
        <position position="266"/>
    </location>
    <ligand>
        <name>Zn(2+)</name>
        <dbReference type="ChEBI" id="CHEBI:29105"/>
        <label>2</label>
    </ligand>
</feature>
<accession>B5ZBB4</accession>
<evidence type="ECO:0000255" key="1">
    <source>
        <dbReference type="HAMAP-Rule" id="MF_00152"/>
    </source>
</evidence>